<protein>
    <recommendedName>
        <fullName evidence="1">ATP phosphoribosyltransferase</fullName>
        <shortName evidence="1">ATP-PRT</shortName>
        <shortName evidence="1">ATP-PRTase</shortName>
        <ecNumber evidence="1">2.4.2.17</ecNumber>
    </recommendedName>
</protein>
<evidence type="ECO:0000255" key="1">
    <source>
        <dbReference type="HAMAP-Rule" id="MF_01018"/>
    </source>
</evidence>
<sequence length="231" mass="25441">MSVTLALPSKGRLKEKTLAVLEKAGYKVVLPDDDRNYRARVEGEDDLDILFLSASEIARELGYGSVDLGVTGEDLARETLAHADERVAIEAQLGFGHADVVVAVPEVWRDVTTMADLDDVAADFRQRHGRRLRIATKYWRLTQQFFSQKHGIQVYRIVESLGATEGAPAAGSADMIVDITSTGSTLRANRLKVLEDGIILRSQACLVSARRSHTSRRVEEIAARIRAGLEI</sequence>
<organism>
    <name type="scientific">Brucella suis biovar 1 (strain 1330)</name>
    <dbReference type="NCBI Taxonomy" id="204722"/>
    <lineage>
        <taxon>Bacteria</taxon>
        <taxon>Pseudomonadati</taxon>
        <taxon>Pseudomonadota</taxon>
        <taxon>Alphaproteobacteria</taxon>
        <taxon>Hyphomicrobiales</taxon>
        <taxon>Brucellaceae</taxon>
        <taxon>Brucella/Ochrobactrum group</taxon>
        <taxon>Brucella</taxon>
    </lineage>
</organism>
<feature type="chain" id="PRO_0000151903" description="ATP phosphoribosyltransferase">
    <location>
        <begin position="1"/>
        <end position="231"/>
    </location>
</feature>
<reference key="1">
    <citation type="journal article" date="2002" name="Proc. Natl. Acad. Sci. U.S.A.">
        <title>The Brucella suis genome reveals fundamental similarities between animal and plant pathogens and symbionts.</title>
        <authorList>
            <person name="Paulsen I.T."/>
            <person name="Seshadri R."/>
            <person name="Nelson K.E."/>
            <person name="Eisen J.A."/>
            <person name="Heidelberg J.F."/>
            <person name="Read T.D."/>
            <person name="Dodson R.J."/>
            <person name="Umayam L.A."/>
            <person name="Brinkac L.M."/>
            <person name="Beanan M.J."/>
            <person name="Daugherty S.C."/>
            <person name="DeBoy R.T."/>
            <person name="Durkin A.S."/>
            <person name="Kolonay J.F."/>
            <person name="Madupu R."/>
            <person name="Nelson W.C."/>
            <person name="Ayodeji B."/>
            <person name="Kraul M."/>
            <person name="Shetty J."/>
            <person name="Malek J.A."/>
            <person name="Van Aken S.E."/>
            <person name="Riedmuller S."/>
            <person name="Tettelin H."/>
            <person name="Gill S.R."/>
            <person name="White O."/>
            <person name="Salzberg S.L."/>
            <person name="Hoover D.L."/>
            <person name="Lindler L.E."/>
            <person name="Halling S.M."/>
            <person name="Boyle S.M."/>
            <person name="Fraser C.M."/>
        </authorList>
    </citation>
    <scope>NUCLEOTIDE SEQUENCE [LARGE SCALE GENOMIC DNA]</scope>
    <source>
        <strain>1330</strain>
    </source>
</reference>
<reference key="2">
    <citation type="journal article" date="2011" name="J. Bacteriol.">
        <title>Revised genome sequence of Brucella suis 1330.</title>
        <authorList>
            <person name="Tae H."/>
            <person name="Shallom S."/>
            <person name="Settlage R."/>
            <person name="Preston D."/>
            <person name="Adams L.G."/>
            <person name="Garner H.R."/>
        </authorList>
    </citation>
    <scope>NUCLEOTIDE SEQUENCE [LARGE SCALE GENOMIC DNA]</scope>
    <source>
        <strain>1330</strain>
    </source>
</reference>
<accession>Q8FX92</accession>
<accession>G0KF29</accession>
<keyword id="KW-0028">Amino-acid biosynthesis</keyword>
<keyword id="KW-0067">ATP-binding</keyword>
<keyword id="KW-0963">Cytoplasm</keyword>
<keyword id="KW-0328">Glycosyltransferase</keyword>
<keyword id="KW-0368">Histidine biosynthesis</keyword>
<keyword id="KW-0547">Nucleotide-binding</keyword>
<keyword id="KW-0808">Transferase</keyword>
<comment type="function">
    <text evidence="1">Catalyzes the condensation of ATP and 5-phosphoribose 1-diphosphate to form N'-(5'-phosphoribosyl)-ATP (PR-ATP). Has a crucial role in the pathway because the rate of histidine biosynthesis seems to be controlled primarily by regulation of HisG enzymatic activity.</text>
</comment>
<comment type="catalytic activity">
    <reaction evidence="1">
        <text>1-(5-phospho-beta-D-ribosyl)-ATP + diphosphate = 5-phospho-alpha-D-ribose 1-diphosphate + ATP</text>
        <dbReference type="Rhea" id="RHEA:18473"/>
        <dbReference type="ChEBI" id="CHEBI:30616"/>
        <dbReference type="ChEBI" id="CHEBI:33019"/>
        <dbReference type="ChEBI" id="CHEBI:58017"/>
        <dbReference type="ChEBI" id="CHEBI:73183"/>
        <dbReference type="EC" id="2.4.2.17"/>
    </reaction>
</comment>
<comment type="pathway">
    <text evidence="1">Amino-acid biosynthesis; L-histidine biosynthesis; L-histidine from 5-phospho-alpha-D-ribose 1-diphosphate: step 1/9.</text>
</comment>
<comment type="subunit">
    <text evidence="1">Heteromultimer composed of HisG and HisZ subunits.</text>
</comment>
<comment type="subcellular location">
    <subcellularLocation>
        <location evidence="1">Cytoplasm</location>
    </subcellularLocation>
</comment>
<comment type="domain">
    <text>Lacks the C-terminal regulatory region which is replaced by HisZ.</text>
</comment>
<comment type="similarity">
    <text evidence="1">Belongs to the ATP phosphoribosyltransferase family. Short subfamily.</text>
</comment>
<dbReference type="EC" id="2.4.2.17" evidence="1"/>
<dbReference type="EMBL" id="AE014292">
    <property type="protein sequence ID" value="AAN33396.1"/>
    <property type="molecule type" value="Genomic_DNA"/>
</dbReference>
<dbReference type="EMBL" id="CP002998">
    <property type="protein sequence ID" value="AEM19673.1"/>
    <property type="molecule type" value="Genomic_DNA"/>
</dbReference>
<dbReference type="RefSeq" id="WP_004690018.1">
    <property type="nucleotide sequence ID" value="NZ_KN046805.1"/>
</dbReference>
<dbReference type="SMR" id="Q8FX92"/>
<dbReference type="GeneID" id="55591905"/>
<dbReference type="KEGG" id="bms:BRA0189"/>
<dbReference type="KEGG" id="bsi:BS1330_II0186"/>
<dbReference type="PATRIC" id="fig|204722.21.peg.2110"/>
<dbReference type="HOGENOM" id="CLU_038115_0_1_5"/>
<dbReference type="PhylomeDB" id="Q8FX92"/>
<dbReference type="UniPathway" id="UPA00031">
    <property type="reaction ID" value="UER00006"/>
</dbReference>
<dbReference type="Proteomes" id="UP000007104">
    <property type="component" value="Chromosome II"/>
</dbReference>
<dbReference type="GO" id="GO:0005737">
    <property type="term" value="C:cytoplasm"/>
    <property type="evidence" value="ECO:0007669"/>
    <property type="project" value="UniProtKB-SubCell"/>
</dbReference>
<dbReference type="GO" id="GO:0005524">
    <property type="term" value="F:ATP binding"/>
    <property type="evidence" value="ECO:0007669"/>
    <property type="project" value="UniProtKB-KW"/>
</dbReference>
<dbReference type="GO" id="GO:0003879">
    <property type="term" value="F:ATP phosphoribosyltransferase activity"/>
    <property type="evidence" value="ECO:0007669"/>
    <property type="project" value="UniProtKB-UniRule"/>
</dbReference>
<dbReference type="GO" id="GO:0000105">
    <property type="term" value="P:L-histidine biosynthetic process"/>
    <property type="evidence" value="ECO:0007669"/>
    <property type="project" value="UniProtKB-UniRule"/>
</dbReference>
<dbReference type="CDD" id="cd13593">
    <property type="entry name" value="PBP2_HisGL3"/>
    <property type="match status" value="1"/>
</dbReference>
<dbReference type="Gene3D" id="3.40.190.10">
    <property type="entry name" value="Periplasmic binding protein-like II"/>
    <property type="match status" value="2"/>
</dbReference>
<dbReference type="HAMAP" id="MF_01018">
    <property type="entry name" value="HisG_Short"/>
    <property type="match status" value="1"/>
</dbReference>
<dbReference type="InterPro" id="IPR013820">
    <property type="entry name" value="ATP_PRibTrfase_cat"/>
</dbReference>
<dbReference type="InterPro" id="IPR018198">
    <property type="entry name" value="ATP_PRibTrfase_CS"/>
</dbReference>
<dbReference type="InterPro" id="IPR001348">
    <property type="entry name" value="ATP_PRibTrfase_HisG"/>
</dbReference>
<dbReference type="InterPro" id="IPR024893">
    <property type="entry name" value="ATP_PRibTrfase_HisG_short"/>
</dbReference>
<dbReference type="NCBIfam" id="TIGR00070">
    <property type="entry name" value="hisG"/>
    <property type="match status" value="1"/>
</dbReference>
<dbReference type="PANTHER" id="PTHR21403:SF8">
    <property type="entry name" value="ATP PHOSPHORIBOSYLTRANSFERASE"/>
    <property type="match status" value="1"/>
</dbReference>
<dbReference type="PANTHER" id="PTHR21403">
    <property type="entry name" value="ATP PHOSPHORIBOSYLTRANSFERASE ATP-PRTASE"/>
    <property type="match status" value="1"/>
</dbReference>
<dbReference type="Pfam" id="PF01634">
    <property type="entry name" value="HisG"/>
    <property type="match status" value="1"/>
</dbReference>
<dbReference type="SUPFAM" id="SSF53850">
    <property type="entry name" value="Periplasmic binding protein-like II"/>
    <property type="match status" value="1"/>
</dbReference>
<dbReference type="PROSITE" id="PS01316">
    <property type="entry name" value="ATP_P_PHORIBOSYLTR"/>
    <property type="match status" value="1"/>
</dbReference>
<name>HIS1_BRUSU</name>
<gene>
    <name evidence="1" type="primary">hisG</name>
    <name type="ordered locus">BRA0189</name>
    <name type="ordered locus">BS1330_II0186</name>
</gene>
<proteinExistence type="inferred from homology"/>